<evidence type="ECO:0000250" key="1"/>
<evidence type="ECO:0000305" key="2"/>
<feature type="initiator methionine" description="Removed" evidence="1">
    <location>
        <position position="1"/>
    </location>
</feature>
<feature type="chain" id="PRO_0000134106" description="Alpha-enolase">
    <location>
        <begin position="2"/>
        <end position="434"/>
    </location>
</feature>
<feature type="active site" description="Proton donor" evidence="1">
    <location>
        <position position="210"/>
    </location>
</feature>
<feature type="active site" description="Proton acceptor" evidence="1">
    <location>
        <position position="343"/>
    </location>
</feature>
<feature type="binding site" evidence="1">
    <location>
        <position position="40"/>
    </location>
    <ligand>
        <name>Mg(2+)</name>
        <dbReference type="ChEBI" id="CHEBI:18420"/>
        <label>1</label>
    </ligand>
</feature>
<feature type="binding site" evidence="1">
    <location>
        <position position="158"/>
    </location>
    <ligand>
        <name>substrate</name>
    </ligand>
</feature>
<feature type="binding site" evidence="1">
    <location>
        <position position="167"/>
    </location>
    <ligand>
        <name>substrate</name>
    </ligand>
</feature>
<feature type="binding site" evidence="1">
    <location>
        <position position="245"/>
    </location>
    <ligand>
        <name>Mg(2+)</name>
        <dbReference type="ChEBI" id="CHEBI:18420"/>
        <label>2</label>
    </ligand>
</feature>
<feature type="binding site" evidence="1">
    <location>
        <position position="293"/>
    </location>
    <ligand>
        <name>Mg(2+)</name>
        <dbReference type="ChEBI" id="CHEBI:18420"/>
        <label>2</label>
    </ligand>
</feature>
<feature type="binding site" evidence="1">
    <location>
        <position position="293"/>
    </location>
    <ligand>
        <name>substrate</name>
    </ligand>
</feature>
<feature type="binding site" evidence="1">
    <location>
        <position position="318"/>
    </location>
    <ligand>
        <name>Mg(2+)</name>
        <dbReference type="ChEBI" id="CHEBI:18420"/>
        <label>2</label>
    </ligand>
</feature>
<feature type="binding site" evidence="1">
    <location>
        <position position="318"/>
    </location>
    <ligand>
        <name>substrate</name>
    </ligand>
</feature>
<feature type="binding site" evidence="1">
    <location>
        <begin position="370"/>
        <end position="373"/>
    </location>
    <ligand>
        <name>substrate</name>
    </ligand>
</feature>
<feature type="binding site" evidence="1">
    <location>
        <position position="394"/>
    </location>
    <ligand>
        <name>substrate</name>
    </ligand>
</feature>
<gene>
    <name type="primary">eno1</name>
</gene>
<name>ENOA_XENLA</name>
<accession>P08734</accession>
<dbReference type="EC" id="4.2.1.11"/>
<dbReference type="EMBL" id="Y00718">
    <property type="protein sequence ID" value="CAA68706.1"/>
    <property type="molecule type" value="mRNA"/>
</dbReference>
<dbReference type="PIR" id="S00463">
    <property type="entry name" value="NOXL"/>
</dbReference>
<dbReference type="RefSeq" id="XP_018082300.1">
    <property type="nucleotide sequence ID" value="XM_018226811.1"/>
</dbReference>
<dbReference type="SMR" id="P08734"/>
<dbReference type="DNASU" id="380298"/>
<dbReference type="GeneID" id="380298"/>
<dbReference type="AGR" id="Xenbase:XB-GENE-6256554"/>
<dbReference type="CTD" id="380298"/>
<dbReference type="Xenbase" id="XB-GENE-6256554">
    <property type="gene designation" value="eno1.S"/>
</dbReference>
<dbReference type="OrthoDB" id="1739814at2759"/>
<dbReference type="SABIO-RK" id="P08734"/>
<dbReference type="UniPathway" id="UPA00109">
    <property type="reaction ID" value="UER00187"/>
</dbReference>
<dbReference type="CD-CODE" id="78E86D56">
    <property type="entry name" value="Mitochondrial cloud"/>
</dbReference>
<dbReference type="Proteomes" id="UP000186698">
    <property type="component" value="Chromosome 7S"/>
</dbReference>
<dbReference type="Bgee" id="380298">
    <property type="expression patterns" value="Expressed in ovary and 19 other cell types or tissues"/>
</dbReference>
<dbReference type="GO" id="GO:0000015">
    <property type="term" value="C:phosphopyruvate hydratase complex"/>
    <property type="evidence" value="ECO:0000318"/>
    <property type="project" value="GO_Central"/>
</dbReference>
<dbReference type="GO" id="GO:0000287">
    <property type="term" value="F:magnesium ion binding"/>
    <property type="evidence" value="ECO:0007669"/>
    <property type="project" value="InterPro"/>
</dbReference>
<dbReference type="GO" id="GO:0004634">
    <property type="term" value="F:phosphopyruvate hydratase activity"/>
    <property type="evidence" value="ECO:0000318"/>
    <property type="project" value="GO_Central"/>
</dbReference>
<dbReference type="GO" id="GO:0006096">
    <property type="term" value="P:glycolytic process"/>
    <property type="evidence" value="ECO:0000318"/>
    <property type="project" value="GO_Central"/>
</dbReference>
<dbReference type="CDD" id="cd03313">
    <property type="entry name" value="enolase"/>
    <property type="match status" value="1"/>
</dbReference>
<dbReference type="FunFam" id="3.30.390.10:FF:000001">
    <property type="entry name" value="Enolase"/>
    <property type="match status" value="1"/>
</dbReference>
<dbReference type="FunFam" id="3.20.20.120:FF:000002">
    <property type="entry name" value="Enolase 1"/>
    <property type="match status" value="1"/>
</dbReference>
<dbReference type="Gene3D" id="3.20.20.120">
    <property type="entry name" value="Enolase-like C-terminal domain"/>
    <property type="match status" value="1"/>
</dbReference>
<dbReference type="Gene3D" id="3.30.390.10">
    <property type="entry name" value="Enolase-like, N-terminal domain"/>
    <property type="match status" value="1"/>
</dbReference>
<dbReference type="HAMAP" id="MF_00318">
    <property type="entry name" value="Enolase"/>
    <property type="match status" value="1"/>
</dbReference>
<dbReference type="InterPro" id="IPR000941">
    <property type="entry name" value="Enolase"/>
</dbReference>
<dbReference type="InterPro" id="IPR036849">
    <property type="entry name" value="Enolase-like_C_sf"/>
</dbReference>
<dbReference type="InterPro" id="IPR029017">
    <property type="entry name" value="Enolase-like_N"/>
</dbReference>
<dbReference type="InterPro" id="IPR020810">
    <property type="entry name" value="Enolase_C"/>
</dbReference>
<dbReference type="InterPro" id="IPR020809">
    <property type="entry name" value="Enolase_CS"/>
</dbReference>
<dbReference type="InterPro" id="IPR020811">
    <property type="entry name" value="Enolase_N"/>
</dbReference>
<dbReference type="NCBIfam" id="TIGR01060">
    <property type="entry name" value="eno"/>
    <property type="match status" value="1"/>
</dbReference>
<dbReference type="PANTHER" id="PTHR11902:SF12">
    <property type="entry name" value="ALPHA-ENOLASE"/>
    <property type="match status" value="1"/>
</dbReference>
<dbReference type="PANTHER" id="PTHR11902">
    <property type="entry name" value="ENOLASE"/>
    <property type="match status" value="1"/>
</dbReference>
<dbReference type="Pfam" id="PF00113">
    <property type="entry name" value="Enolase_C"/>
    <property type="match status" value="1"/>
</dbReference>
<dbReference type="Pfam" id="PF03952">
    <property type="entry name" value="Enolase_N"/>
    <property type="match status" value="1"/>
</dbReference>
<dbReference type="PIRSF" id="PIRSF001400">
    <property type="entry name" value="Enolase"/>
    <property type="match status" value="1"/>
</dbReference>
<dbReference type="PRINTS" id="PR00148">
    <property type="entry name" value="ENOLASE"/>
</dbReference>
<dbReference type="SFLD" id="SFLDF00002">
    <property type="entry name" value="enolase"/>
    <property type="match status" value="1"/>
</dbReference>
<dbReference type="SFLD" id="SFLDG00178">
    <property type="entry name" value="enolase"/>
    <property type="match status" value="1"/>
</dbReference>
<dbReference type="SMART" id="SM01192">
    <property type="entry name" value="Enolase_C"/>
    <property type="match status" value="1"/>
</dbReference>
<dbReference type="SMART" id="SM01193">
    <property type="entry name" value="Enolase_N"/>
    <property type="match status" value="1"/>
</dbReference>
<dbReference type="SUPFAM" id="SSF51604">
    <property type="entry name" value="Enolase C-terminal domain-like"/>
    <property type="match status" value="1"/>
</dbReference>
<dbReference type="SUPFAM" id="SSF54826">
    <property type="entry name" value="Enolase N-terminal domain-like"/>
    <property type="match status" value="1"/>
</dbReference>
<dbReference type="PROSITE" id="PS00164">
    <property type="entry name" value="ENOLASE"/>
    <property type="match status" value="1"/>
</dbReference>
<reference key="1">
    <citation type="journal article" date="1988" name="Biochem. J.">
        <title>Enolase isoenzymes in adult and developing Xenopus laevis and characterization of a cloned enolase sequence.</title>
        <authorList>
            <person name="Segil N."/>
            <person name="Shrutkowski A."/>
            <person name="Dworkin M.B."/>
            <person name="Dworkin-Rastl E."/>
        </authorList>
    </citation>
    <scope>NUCLEOTIDE SEQUENCE [MRNA]</scope>
</reference>
<comment type="catalytic activity">
    <reaction>
        <text>(2R)-2-phosphoglycerate = phosphoenolpyruvate + H2O</text>
        <dbReference type="Rhea" id="RHEA:10164"/>
        <dbReference type="ChEBI" id="CHEBI:15377"/>
        <dbReference type="ChEBI" id="CHEBI:58289"/>
        <dbReference type="ChEBI" id="CHEBI:58702"/>
        <dbReference type="EC" id="4.2.1.11"/>
    </reaction>
</comment>
<comment type="cofactor">
    <cofactor evidence="1">
        <name>Mg(2+)</name>
        <dbReference type="ChEBI" id="CHEBI:18420"/>
    </cofactor>
    <text evidence="1">Binds two Mg(2+) per subunit. Required for catalysis and for stabilizing the dimer.</text>
</comment>
<comment type="pathway">
    <text>Carbohydrate degradation; glycolysis; pyruvate from D-glyceraldehyde 3-phosphate: step 4/5.</text>
</comment>
<comment type="subunit">
    <text>Homodimer.</text>
</comment>
<comment type="subcellular location">
    <subcellularLocation>
        <location>Cytoplasm</location>
    </subcellularLocation>
</comment>
<comment type="similarity">
    <text evidence="2">Belongs to the enolase family.</text>
</comment>
<protein>
    <recommendedName>
        <fullName>Alpha-enolase</fullName>
        <ecNumber>4.2.1.11</ecNumber>
    </recommendedName>
    <alternativeName>
        <fullName>2-phospho-D-glycerate hydro-lyase</fullName>
    </alternativeName>
    <alternativeName>
        <fullName>2-phosphoglycerate dehydratase</fullName>
    </alternativeName>
</protein>
<sequence>MSIKNIRAREIFDSRGNPTVEVDLYTCKGLFRAAVPSGASTGIYEALELRDNDKTRYLGKGVGRAVKYVNEFLGPALCTQNLNVVEQEKIDKLMIEMDGTENKSKFGANALLGVSLAVCKAGAAEKGVPLYRHIADLAGNPEVILPVPAFNVINGGSHAGNKLAMQEFMILPVGADSFKEAMRIGAEVYHNLKNVIKEKYGKDATNVGDEGGFAPNILENKEALELLKTAINKAGYPDKIVIGMDVAASEFYRDGKYDLDFKSPDDPSRYISPDKLAELYMSFVKNYPVVSIEDPFDQDHWEAWTKFTAASGIQVVGDDLTVTNPKRIAKAVEEKACNCLLLKVNQIGTVTESLEACKLAQSNGWGVMVSHRSGETEDTFIADLVVGLCTGQIKTGAPCRSERLAKYNQLLRIEEELGSKARFAGKNFRKPVFN</sequence>
<keyword id="KW-0963">Cytoplasm</keyword>
<keyword id="KW-0324">Glycolysis</keyword>
<keyword id="KW-0456">Lyase</keyword>
<keyword id="KW-0460">Magnesium</keyword>
<keyword id="KW-0479">Metal-binding</keyword>
<keyword id="KW-1185">Reference proteome</keyword>
<proteinExistence type="evidence at transcript level"/>
<organism>
    <name type="scientific">Xenopus laevis</name>
    <name type="common">African clawed frog</name>
    <dbReference type="NCBI Taxonomy" id="8355"/>
    <lineage>
        <taxon>Eukaryota</taxon>
        <taxon>Metazoa</taxon>
        <taxon>Chordata</taxon>
        <taxon>Craniata</taxon>
        <taxon>Vertebrata</taxon>
        <taxon>Euteleostomi</taxon>
        <taxon>Amphibia</taxon>
        <taxon>Batrachia</taxon>
        <taxon>Anura</taxon>
        <taxon>Pipoidea</taxon>
        <taxon>Pipidae</taxon>
        <taxon>Xenopodinae</taxon>
        <taxon>Xenopus</taxon>
        <taxon>Xenopus</taxon>
    </lineage>
</organism>